<accession>P0CAK5</accession>
<reference key="1">
    <citation type="submission" date="2003-03" db="EMBL/GenBank/DDBJ databases">
        <title>African swine fever virus genomes.</title>
        <authorList>
            <person name="Kutish G.F."/>
            <person name="Rock D.L."/>
        </authorList>
    </citation>
    <scope>NUCLEOTIDE SEQUENCE [LARGE SCALE GENOMIC DNA]</scope>
</reference>
<organism>
    <name type="scientific">African swine fever virus (isolate Warthog/Namibia/Wart80/1980)</name>
    <name type="common">ASFV</name>
    <dbReference type="NCBI Taxonomy" id="561444"/>
    <lineage>
        <taxon>Viruses</taxon>
        <taxon>Varidnaviria</taxon>
        <taxon>Bamfordvirae</taxon>
        <taxon>Nucleocytoviricota</taxon>
        <taxon>Pokkesviricetes</taxon>
        <taxon>Asfuvirales</taxon>
        <taxon>Asfarviridae</taxon>
        <taxon>Asfivirus</taxon>
        <taxon>African swine fever virus</taxon>
    </lineage>
</organism>
<dbReference type="EMBL" id="AY261366">
    <property type="status" value="NOT_ANNOTATED_CDS"/>
    <property type="molecule type" value="Genomic_DNA"/>
</dbReference>
<dbReference type="Proteomes" id="UP000000858">
    <property type="component" value="Segment"/>
</dbReference>
<name>VF79_ASFWA</name>
<feature type="chain" id="PRO_0000373733" description="Uncharacterized protein D79L">
    <location>
        <begin position="1"/>
        <end position="79"/>
    </location>
</feature>
<gene>
    <name type="ordered locus">War-114</name>
</gene>
<comment type="similarity">
    <text evidence="1">Belongs to the asfivirus D79L family.</text>
</comment>
<evidence type="ECO:0000305" key="1"/>
<sequence length="79" mass="9275">MNKTIEYQKEFLKENNQLLSIPVKKNILKEILQNDEQDTIITNCITKEVSINLDLIKNPKVLYSIYIMVVEYLKSMNIA</sequence>
<protein>
    <recommendedName>
        <fullName>Uncharacterized protein D79L</fullName>
        <shortName>pD79L</shortName>
    </recommendedName>
</protein>
<organismHost>
    <name type="scientific">Ornithodoros</name>
    <name type="common">relapsing fever ticks</name>
    <dbReference type="NCBI Taxonomy" id="6937"/>
</organismHost>
<organismHost>
    <name type="scientific">Phacochoerus aethiopicus</name>
    <name type="common">Warthog</name>
    <dbReference type="NCBI Taxonomy" id="85517"/>
</organismHost>
<organismHost>
    <name type="scientific">Phacochoerus africanus</name>
    <name type="common">Warthog</name>
    <dbReference type="NCBI Taxonomy" id="41426"/>
</organismHost>
<organismHost>
    <name type="scientific">Potamochoerus larvatus</name>
    <name type="common">Bushpig</name>
    <dbReference type="NCBI Taxonomy" id="273792"/>
</organismHost>
<organismHost>
    <name type="scientific">Sus scrofa</name>
    <name type="common">Pig</name>
    <dbReference type="NCBI Taxonomy" id="9823"/>
</organismHost>
<proteinExistence type="inferred from homology"/>